<comment type="function">
    <text evidence="2">DNA repair protein that may operate in a postreplication repair or a cell cycle checkpoint function. May be implicated in interstrand DNA cross-link repair and in the maintenance of normal chromosome stability.</text>
</comment>
<comment type="subunit">
    <text evidence="1">Belongs to the multisubunit FA complex composed of FANCA, FANCB, FANCC, FANCE, FANCF, FANCG, FANCL/PHF9 and FANCM. In complex with FANCA, FANCG and FANCL, but not with FANCC, nor FANCE, interacts with HES1; this interaction may be essential for the stability and nuclear localization of FA core complex proteins.</text>
</comment>
<comment type="subcellular location">
    <subcellularLocation>
        <location evidence="1">Nucleus</location>
    </subcellularLocation>
</comment>
<comment type="disruption phenotype">
    <text evidence="2">Viable with no gross developmental abnormalities or significant growth retardation. Gonad defects are present in both male and female mice. Testes are devoid of germ cells. Ovaries show premature depletion of primordial follicles with almost complete loss by 14 weeks of age, and aberrant estrous cycle. Significantly increased incidence of tumors, particularly ovarian tumors.</text>
</comment>
<feature type="chain" id="PRO_0000436204" description="Fanconi anemia group F protein">
    <location>
        <begin position="1"/>
        <end position="343"/>
    </location>
</feature>
<proteinExistence type="inferred from homology"/>
<sequence length="343" mass="38224">MEPLVQQTERFSELLAVSCGSLVSTWDAEKVRRALQWARYLLHVYRRFAGRGRVREALERRLPARGGPLGLRSFAALESGDARLALRLLRNRALAPAAARALPSLLFPGPAADHRDDVPQSRLVLLARRGSALRLLCRLGGDAPRSALLRTHAELLDARLHELGGADSAAARKLLDTLWTRGPREHVLDVTAEALLLREEDPEPAQATDPAGADETQKLLRWLLESPEVLAAFCRHLPAKRLASVAGCHHALSRAYLDLLTTWATRLHYDLQKGAWVPTQMEDMPWEELCLRLQSLCHAQPFLQEEVLVTLRSRKALDGDFEVPGMSIWTDLLVVLECGIVLE</sequence>
<gene>
    <name evidence="4" type="primary">Fancf</name>
</gene>
<organism evidence="5">
    <name type="scientific">Mus musculus</name>
    <name type="common">Mouse</name>
    <dbReference type="NCBI Taxonomy" id="10090"/>
    <lineage>
        <taxon>Eukaryota</taxon>
        <taxon>Metazoa</taxon>
        <taxon>Chordata</taxon>
        <taxon>Craniata</taxon>
        <taxon>Vertebrata</taxon>
        <taxon>Euteleostomi</taxon>
        <taxon>Mammalia</taxon>
        <taxon>Eutheria</taxon>
        <taxon>Euarchontoglires</taxon>
        <taxon>Glires</taxon>
        <taxon>Rodentia</taxon>
        <taxon>Myomorpha</taxon>
        <taxon>Muroidea</taxon>
        <taxon>Muridae</taxon>
        <taxon>Murinae</taxon>
        <taxon>Mus</taxon>
        <taxon>Mus</taxon>
    </lineage>
</organism>
<dbReference type="EMBL" id="AC158345">
    <property type="status" value="NOT_ANNOTATED_CDS"/>
    <property type="molecule type" value="Genomic_DNA"/>
</dbReference>
<dbReference type="CCDS" id="CCDS52261.1"/>
<dbReference type="RefSeq" id="NP_001108559.1">
    <property type="nucleotide sequence ID" value="NM_001115087.1"/>
</dbReference>
<dbReference type="SMR" id="E9Q5Z5"/>
<dbReference type="FunCoup" id="E9Q5Z5">
    <property type="interactions" value="690"/>
</dbReference>
<dbReference type="STRING" id="10090.ENSMUSP00000125812"/>
<dbReference type="iPTMnet" id="E9Q5Z5"/>
<dbReference type="PhosphoSitePlus" id="E9Q5Z5"/>
<dbReference type="PaxDb" id="10090-ENSMUSP00000125812"/>
<dbReference type="ProteomicsDB" id="267711"/>
<dbReference type="Antibodypedia" id="25340">
    <property type="antibodies" value="182 antibodies from 27 providers"/>
</dbReference>
<dbReference type="Ensembl" id="ENSMUST00000169357.2">
    <property type="protein sequence ID" value="ENSMUSP00000125812.2"/>
    <property type="gene ID" value="ENSMUSG00000092118.2"/>
</dbReference>
<dbReference type="GeneID" id="100040608"/>
<dbReference type="KEGG" id="mmu:100040608"/>
<dbReference type="UCSC" id="uc012flg.2">
    <property type="organism name" value="mouse"/>
</dbReference>
<dbReference type="AGR" id="MGI:3689889"/>
<dbReference type="CTD" id="2188"/>
<dbReference type="MGI" id="MGI:3689889">
    <property type="gene designation" value="Fancf"/>
</dbReference>
<dbReference type="VEuPathDB" id="HostDB:ENSMUSG00000092118"/>
<dbReference type="eggNOG" id="ENOG502S2Z3">
    <property type="taxonomic scope" value="Eukaryota"/>
</dbReference>
<dbReference type="GeneTree" id="ENSGT00390000005623"/>
<dbReference type="HOGENOM" id="CLU_770617_0_0_1"/>
<dbReference type="InParanoid" id="E9Q5Z5"/>
<dbReference type="OMA" id="LQWARYL"/>
<dbReference type="OrthoDB" id="6429998at2759"/>
<dbReference type="PhylomeDB" id="E9Q5Z5"/>
<dbReference type="TreeFam" id="TF332957"/>
<dbReference type="Reactome" id="R-MMU-6783310">
    <property type="pathway name" value="Fanconi Anemia Pathway"/>
</dbReference>
<dbReference type="Reactome" id="R-MMU-9833482">
    <property type="pathway name" value="PKR-mediated signaling"/>
</dbReference>
<dbReference type="BioGRID-ORCS" id="100040608">
    <property type="hits" value="22 hits in 115 CRISPR screens"/>
</dbReference>
<dbReference type="ChiTaRS" id="Fancf">
    <property type="organism name" value="mouse"/>
</dbReference>
<dbReference type="PRO" id="PR:E9Q5Z5"/>
<dbReference type="Proteomes" id="UP000000589">
    <property type="component" value="Chromosome 7"/>
</dbReference>
<dbReference type="RNAct" id="E9Q5Z5">
    <property type="molecule type" value="protein"/>
</dbReference>
<dbReference type="Bgee" id="ENSMUSG00000092118">
    <property type="expression patterns" value="Expressed in optic fissure and 236 other cell types or tissues"/>
</dbReference>
<dbReference type="GO" id="GO:0043240">
    <property type="term" value="C:Fanconi anaemia nuclear complex"/>
    <property type="evidence" value="ECO:0000315"/>
    <property type="project" value="MGI"/>
</dbReference>
<dbReference type="GO" id="GO:0006974">
    <property type="term" value="P:DNA damage response"/>
    <property type="evidence" value="ECO:0000315"/>
    <property type="project" value="MGI"/>
</dbReference>
<dbReference type="GO" id="GO:0036297">
    <property type="term" value="P:interstrand cross-link repair"/>
    <property type="evidence" value="ECO:0007669"/>
    <property type="project" value="InterPro"/>
</dbReference>
<dbReference type="GO" id="GO:0001541">
    <property type="term" value="P:ovarian follicle development"/>
    <property type="evidence" value="ECO:0000315"/>
    <property type="project" value="MGI"/>
</dbReference>
<dbReference type="GO" id="GO:0016567">
    <property type="term" value="P:protein ubiquitination"/>
    <property type="evidence" value="ECO:0000315"/>
    <property type="project" value="MGI"/>
</dbReference>
<dbReference type="GO" id="GO:0007283">
    <property type="term" value="P:spermatogenesis"/>
    <property type="evidence" value="ECO:0000315"/>
    <property type="project" value="MGI"/>
</dbReference>
<dbReference type="FunFam" id="1.25.40.490:FF:000001">
    <property type="entry name" value="Fanconi anemia, complementation group F"/>
    <property type="match status" value="1"/>
</dbReference>
<dbReference type="Gene3D" id="1.25.40.490">
    <property type="match status" value="1"/>
</dbReference>
<dbReference type="InterPro" id="IPR035428">
    <property type="entry name" value="FANCF"/>
</dbReference>
<dbReference type="InterPro" id="IPR038505">
    <property type="entry name" value="FANCF_C_sf"/>
</dbReference>
<dbReference type="PANTHER" id="PTHR14449:SF2">
    <property type="entry name" value="FANCONI ANEMIA GROUP F PROTEIN"/>
    <property type="match status" value="1"/>
</dbReference>
<dbReference type="PANTHER" id="PTHR14449">
    <property type="entry name" value="FANCONI ANEMIA GROUP F PROTEIN FANCF"/>
    <property type="match status" value="1"/>
</dbReference>
<dbReference type="Pfam" id="PF11107">
    <property type="entry name" value="FANCF"/>
    <property type="match status" value="1"/>
</dbReference>
<name>FANCF_MOUSE</name>
<protein>
    <recommendedName>
        <fullName evidence="1">Fanconi anemia group F protein</fullName>
        <shortName evidence="1">Protein FACF</shortName>
    </recommendedName>
</protein>
<keyword id="KW-0227">DNA damage</keyword>
<keyword id="KW-0234">DNA repair</keyword>
<keyword id="KW-0539">Nucleus</keyword>
<keyword id="KW-1185">Reference proteome</keyword>
<reference evidence="5" key="1">
    <citation type="journal article" date="2009" name="PLoS Biol.">
        <title>Lineage-specific biology revealed by a finished genome assembly of the mouse.</title>
        <authorList>
            <person name="Church D.M."/>
            <person name="Goodstadt L."/>
            <person name="Hillier L.W."/>
            <person name="Zody M.C."/>
            <person name="Goldstein S."/>
            <person name="She X."/>
            <person name="Bult C.J."/>
            <person name="Agarwala R."/>
            <person name="Cherry J.L."/>
            <person name="DiCuccio M."/>
            <person name="Hlavina W."/>
            <person name="Kapustin Y."/>
            <person name="Meric P."/>
            <person name="Maglott D."/>
            <person name="Birtle Z."/>
            <person name="Marques A.C."/>
            <person name="Graves T."/>
            <person name="Zhou S."/>
            <person name="Teague B."/>
            <person name="Potamousis K."/>
            <person name="Churas C."/>
            <person name="Place M."/>
            <person name="Herschleb J."/>
            <person name="Runnheim R."/>
            <person name="Forrest D."/>
            <person name="Amos-Landgraf J."/>
            <person name="Schwartz D.C."/>
            <person name="Cheng Z."/>
            <person name="Lindblad-Toh K."/>
            <person name="Eichler E.E."/>
            <person name="Ponting C.P."/>
        </authorList>
    </citation>
    <scope>NUCLEOTIDE SEQUENCE [LARGE SCALE GENOMIC DNA]</scope>
    <source>
        <strain evidence="5">C57BL/6J</strain>
    </source>
</reference>
<reference evidence="3" key="2">
    <citation type="journal article" date="2012" name="J. Pathol.">
        <title>Fancf-deficient mice are prone to develop ovarian tumours.</title>
        <authorList>
            <person name="Bakker S.T."/>
            <person name="van de Vrugt H.J."/>
            <person name="Visser J.A."/>
            <person name="Delzenne-Goette E."/>
            <person name="van der Wal A."/>
            <person name="Berns M.A."/>
            <person name="van de Ven M."/>
            <person name="Oostra A.B."/>
            <person name="de Vries S."/>
            <person name="Kramer P."/>
            <person name="Arwert F."/>
            <person name="van der Valk M."/>
            <person name="de Winter J.P."/>
            <person name="te Riele H."/>
        </authorList>
    </citation>
    <scope>FUNCTION</scope>
    <scope>DISRUPTION PHENOTYPE</scope>
</reference>
<accession>E9Q5Z5</accession>
<evidence type="ECO:0000250" key="1">
    <source>
        <dbReference type="UniProtKB" id="Q9NPI8"/>
    </source>
</evidence>
<evidence type="ECO:0000269" key="2">
    <source>
    </source>
</evidence>
<evidence type="ECO:0000305" key="3"/>
<evidence type="ECO:0000312" key="4">
    <source>
        <dbReference type="MGI" id="MGI:3689889"/>
    </source>
</evidence>
<evidence type="ECO:0000312" key="5">
    <source>
        <dbReference type="Proteomes" id="UP000000589"/>
    </source>
</evidence>